<name>NADHK_ARATH</name>
<proteinExistence type="evidence at protein level"/>
<reference key="1">
    <citation type="submission" date="2005-05" db="EMBL/GenBank/DDBJ databases">
        <title>Arabidopsis cDNA clones.</title>
        <authorList>
            <person name="Shinn P."/>
            <person name="Chen H."/>
            <person name="Cheuk R.F."/>
            <person name="Kim C.J."/>
            <person name="Ecker J.R."/>
        </authorList>
    </citation>
    <scope>NUCLEOTIDE SEQUENCE [LARGE SCALE MRNA]</scope>
    <source>
        <strain>cv. Columbia</strain>
    </source>
</reference>
<reference key="2">
    <citation type="journal article" date="2000" name="Nature">
        <title>Sequence and analysis of chromosome 1 of the plant Arabidopsis thaliana.</title>
        <authorList>
            <person name="Theologis A."/>
            <person name="Ecker J.R."/>
            <person name="Palm C.J."/>
            <person name="Federspiel N.A."/>
            <person name="Kaul S."/>
            <person name="White O."/>
            <person name="Alonso J."/>
            <person name="Altafi H."/>
            <person name="Araujo R."/>
            <person name="Bowman C.L."/>
            <person name="Brooks S.Y."/>
            <person name="Buehler E."/>
            <person name="Chan A."/>
            <person name="Chao Q."/>
            <person name="Chen H."/>
            <person name="Cheuk R.F."/>
            <person name="Chin C.W."/>
            <person name="Chung M.K."/>
            <person name="Conn L."/>
            <person name="Conway A.B."/>
            <person name="Conway A.R."/>
            <person name="Creasy T.H."/>
            <person name="Dewar K."/>
            <person name="Dunn P."/>
            <person name="Etgu P."/>
            <person name="Feldblyum T.V."/>
            <person name="Feng J.-D."/>
            <person name="Fong B."/>
            <person name="Fujii C.Y."/>
            <person name="Gill J.E."/>
            <person name="Goldsmith A.D."/>
            <person name="Haas B."/>
            <person name="Hansen N.F."/>
            <person name="Hughes B."/>
            <person name="Huizar L."/>
            <person name="Hunter J.L."/>
            <person name="Jenkins J."/>
            <person name="Johnson-Hopson C."/>
            <person name="Khan S."/>
            <person name="Khaykin E."/>
            <person name="Kim C.J."/>
            <person name="Koo H.L."/>
            <person name="Kremenetskaia I."/>
            <person name="Kurtz D.B."/>
            <person name="Kwan A."/>
            <person name="Lam B."/>
            <person name="Langin-Hooper S."/>
            <person name="Lee A."/>
            <person name="Lee J.M."/>
            <person name="Lenz C.A."/>
            <person name="Li J.H."/>
            <person name="Li Y.-P."/>
            <person name="Lin X."/>
            <person name="Liu S.X."/>
            <person name="Liu Z.A."/>
            <person name="Luros J.S."/>
            <person name="Maiti R."/>
            <person name="Marziali A."/>
            <person name="Militscher J."/>
            <person name="Miranda M."/>
            <person name="Nguyen M."/>
            <person name="Nierman W.C."/>
            <person name="Osborne B.I."/>
            <person name="Pai G."/>
            <person name="Peterson J."/>
            <person name="Pham P.K."/>
            <person name="Rizzo M."/>
            <person name="Rooney T."/>
            <person name="Rowley D."/>
            <person name="Sakano H."/>
            <person name="Salzberg S.L."/>
            <person name="Schwartz J.R."/>
            <person name="Shinn P."/>
            <person name="Southwick A.M."/>
            <person name="Sun H."/>
            <person name="Tallon L.J."/>
            <person name="Tambunga G."/>
            <person name="Toriumi M.J."/>
            <person name="Town C.D."/>
            <person name="Utterback T."/>
            <person name="Van Aken S."/>
            <person name="Vaysberg M."/>
            <person name="Vysotskaia V.S."/>
            <person name="Walker M."/>
            <person name="Wu D."/>
            <person name="Yu G."/>
            <person name="Fraser C.M."/>
            <person name="Venter J.C."/>
            <person name="Davis R.W."/>
        </authorList>
    </citation>
    <scope>NUCLEOTIDE SEQUENCE [LARGE SCALE GENOMIC DNA]</scope>
    <source>
        <strain>cv. Columbia</strain>
    </source>
</reference>
<reference key="3">
    <citation type="journal article" date="2017" name="Plant J.">
        <title>Araport11: a complete reannotation of the Arabidopsis thaliana reference genome.</title>
        <authorList>
            <person name="Cheng C.Y."/>
            <person name="Krishnakumar V."/>
            <person name="Chan A.P."/>
            <person name="Thibaud-Nissen F."/>
            <person name="Schobel S."/>
            <person name="Town C.D."/>
        </authorList>
    </citation>
    <scope>GENOME REANNOTATION</scope>
    <source>
        <strain>cv. Columbia</strain>
    </source>
</reference>
<reference key="4">
    <citation type="journal article" date="2005" name="Biochem. J.">
        <title>Identification, molecular cloning and functional characterization of a novel NADH kinase from Arabidopsis thaliana (thale cress).</title>
        <authorList>
            <person name="Turner W.L."/>
            <person name="Waller J.C."/>
            <person name="Snedden W.A."/>
        </authorList>
    </citation>
    <scope>FUNCTION</scope>
    <scope>CATALYTIC ACTIVITY</scope>
    <scope>BIOPHYSICOCHEMICAL PROPERTIES</scope>
    <scope>ACTIVITY REGULATION</scope>
    <scope>SUBUNIT</scope>
    <scope>SUBCELLULAR LOCATION</scope>
</reference>
<reference key="5">
    <citation type="journal article" date="2005" name="Mol. Genet. Genomics">
        <title>Stress induces the expression of AtNADK-1, a gene encoding a NAD(H) kinase in Arabidopsis thaliana.</title>
        <authorList>
            <person name="Berrin J.-G."/>
            <person name="Pierrugues O."/>
            <person name="Brutesco C."/>
            <person name="Alonso B."/>
            <person name="Montillet J.-L."/>
            <person name="Roby D."/>
            <person name="Kazmaier M."/>
        </authorList>
    </citation>
    <scope>TISSUE SPECIFICITY</scope>
</reference>
<gene>
    <name type="primary">NADK3</name>
    <name type="ordered locus">At1g78590</name>
    <name type="ORF">T30F21.8</name>
</gene>
<evidence type="ECO:0000269" key="1">
    <source>
    </source>
</evidence>
<evidence type="ECO:0000269" key="2">
    <source>
    </source>
</evidence>
<evidence type="ECO:0000303" key="3">
    <source>
    </source>
</evidence>
<evidence type="ECO:0000305" key="4"/>
<evidence type="ECO:0000305" key="5">
    <source>
    </source>
</evidence>
<keyword id="KW-0067">ATP-binding</keyword>
<keyword id="KW-0963">Cytoplasm</keyword>
<keyword id="KW-0418">Kinase</keyword>
<keyword id="KW-0520">NAD</keyword>
<keyword id="KW-0521">NADP</keyword>
<keyword id="KW-0547">Nucleotide-binding</keyword>
<keyword id="KW-1185">Reference proteome</keyword>
<keyword id="KW-0808">Transferase</keyword>
<sequence length="317" mass="34831">MAIRKLLLLLKPIDPYPFLQTEGASLIKNPQVLQYLESRCKVHKNAIKFCQEILSKKPVEWKPISRNDLSHPIRDVDMVITVGGDGTLLHASHFIDDSVPVLGVNSDPTQAHEVEELSDQFDASRSTGHLCAATVENFEQVLDDILFGRVVPAKVSRISLKLNSETLLSHALNDILIAQPCPAAVSRFSFKIKNKDGASSPKTVNCRSSGLRICTAAGSTAAMQSAGGFVMPMLSRDLQFMVREPISPGSTASLMHSTFKPDQFMDVNWYSDHGTIYIDGCQVQHSVQLGDTIEISSDAPVLNVFLSHGISQIRSRY</sequence>
<organism>
    <name type="scientific">Arabidopsis thaliana</name>
    <name type="common">Mouse-ear cress</name>
    <dbReference type="NCBI Taxonomy" id="3702"/>
    <lineage>
        <taxon>Eukaryota</taxon>
        <taxon>Viridiplantae</taxon>
        <taxon>Streptophyta</taxon>
        <taxon>Embryophyta</taxon>
        <taxon>Tracheophyta</taxon>
        <taxon>Spermatophyta</taxon>
        <taxon>Magnoliopsida</taxon>
        <taxon>eudicotyledons</taxon>
        <taxon>Gunneridae</taxon>
        <taxon>Pentapetalae</taxon>
        <taxon>rosids</taxon>
        <taxon>malvids</taxon>
        <taxon>Brassicales</taxon>
        <taxon>Brassicaceae</taxon>
        <taxon>Camelineae</taxon>
        <taxon>Arabidopsis</taxon>
    </lineage>
</organism>
<dbReference type="EC" id="2.7.1.86" evidence="5"/>
<dbReference type="EMBL" id="BT022078">
    <property type="protein sequence ID" value="AAY27065.1"/>
    <property type="molecule type" value="mRNA"/>
</dbReference>
<dbReference type="EMBL" id="AC007260">
    <property type="protein sequence ID" value="AAD30577.1"/>
    <property type="status" value="ALT_SEQ"/>
    <property type="molecule type" value="Genomic_DNA"/>
</dbReference>
<dbReference type="EMBL" id="CP002684">
    <property type="protein sequence ID" value="AEE36124.1"/>
    <property type="molecule type" value="Genomic_DNA"/>
</dbReference>
<dbReference type="PIR" id="E96814">
    <property type="entry name" value="E96814"/>
</dbReference>
<dbReference type="RefSeq" id="NP_177980.2">
    <property type="nucleotide sequence ID" value="NM_106506.3"/>
</dbReference>
<dbReference type="SMR" id="Q500Y9"/>
<dbReference type="BioGRID" id="29414">
    <property type="interactions" value="1"/>
</dbReference>
<dbReference type="FunCoup" id="Q500Y9">
    <property type="interactions" value="248"/>
</dbReference>
<dbReference type="STRING" id="3702.Q500Y9"/>
<dbReference type="iPTMnet" id="Q500Y9"/>
<dbReference type="PaxDb" id="3702-AT1G78590.1"/>
<dbReference type="ProteomicsDB" id="251035"/>
<dbReference type="DNASU" id="844195"/>
<dbReference type="EnsemblPlants" id="AT1G78590.1">
    <property type="protein sequence ID" value="AT1G78590.1"/>
    <property type="gene ID" value="AT1G78590"/>
</dbReference>
<dbReference type="GeneID" id="844195"/>
<dbReference type="Gramene" id="AT1G78590.1">
    <property type="protein sequence ID" value="AT1G78590.1"/>
    <property type="gene ID" value="AT1G78590"/>
</dbReference>
<dbReference type="KEGG" id="ath:AT1G78590"/>
<dbReference type="Araport" id="AT1G78590"/>
<dbReference type="TAIR" id="AT1G78590">
    <property type="gene designation" value="NADK3"/>
</dbReference>
<dbReference type="eggNOG" id="KOG4180">
    <property type="taxonomic scope" value="Eukaryota"/>
</dbReference>
<dbReference type="HOGENOM" id="CLU_067437_0_0_1"/>
<dbReference type="InParanoid" id="Q500Y9"/>
<dbReference type="OMA" id="KSVEWKA"/>
<dbReference type="PhylomeDB" id="Q500Y9"/>
<dbReference type="BRENDA" id="2.7.1.23">
    <property type="organism ID" value="399"/>
</dbReference>
<dbReference type="PRO" id="PR:Q500Y9"/>
<dbReference type="Proteomes" id="UP000006548">
    <property type="component" value="Chromosome 1"/>
</dbReference>
<dbReference type="ExpressionAtlas" id="Q500Y9">
    <property type="expression patterns" value="baseline and differential"/>
</dbReference>
<dbReference type="GO" id="GO:0005737">
    <property type="term" value="C:cytoplasm"/>
    <property type="evidence" value="ECO:0000314"/>
    <property type="project" value="TAIR"/>
</dbReference>
<dbReference type="GO" id="GO:0005829">
    <property type="term" value="C:cytosol"/>
    <property type="evidence" value="ECO:0000314"/>
    <property type="project" value="TAIR"/>
</dbReference>
<dbReference type="GO" id="GO:0005524">
    <property type="term" value="F:ATP binding"/>
    <property type="evidence" value="ECO:0007669"/>
    <property type="project" value="UniProtKB-KW"/>
</dbReference>
<dbReference type="GO" id="GO:0042802">
    <property type="term" value="F:identical protein binding"/>
    <property type="evidence" value="ECO:0000353"/>
    <property type="project" value="IntAct"/>
</dbReference>
<dbReference type="GO" id="GO:0003951">
    <property type="term" value="F:NAD+ kinase activity"/>
    <property type="evidence" value="ECO:0000314"/>
    <property type="project" value="TAIR"/>
</dbReference>
<dbReference type="GO" id="GO:0042736">
    <property type="term" value="F:NADH kinase activity"/>
    <property type="evidence" value="ECO:0000314"/>
    <property type="project" value="TAIR"/>
</dbReference>
<dbReference type="GO" id="GO:0019674">
    <property type="term" value="P:NAD metabolic process"/>
    <property type="evidence" value="ECO:0007669"/>
    <property type="project" value="InterPro"/>
</dbReference>
<dbReference type="GO" id="GO:0006741">
    <property type="term" value="P:NADP biosynthetic process"/>
    <property type="evidence" value="ECO:0000315"/>
    <property type="project" value="TAIR"/>
</dbReference>
<dbReference type="FunFam" id="2.60.200.30:FF:000015">
    <property type="entry name" value="NAD(H) kinase 3"/>
    <property type="match status" value="1"/>
</dbReference>
<dbReference type="FunFam" id="3.40.50.10330:FF:000027">
    <property type="entry name" value="NADH kinase"/>
    <property type="match status" value="1"/>
</dbReference>
<dbReference type="Gene3D" id="3.40.50.10330">
    <property type="entry name" value="Probable inorganic polyphosphate/atp-NAD kinase, domain 1"/>
    <property type="match status" value="1"/>
</dbReference>
<dbReference type="Gene3D" id="2.60.200.30">
    <property type="entry name" value="Probable inorganic polyphosphate/atp-NAD kinase, domain 2"/>
    <property type="match status" value="1"/>
</dbReference>
<dbReference type="InterPro" id="IPR017438">
    <property type="entry name" value="ATP-NAD_kinase_N"/>
</dbReference>
<dbReference type="InterPro" id="IPR017437">
    <property type="entry name" value="ATP-NAD_kinase_PpnK-typ_C"/>
</dbReference>
<dbReference type="InterPro" id="IPR016064">
    <property type="entry name" value="NAD/diacylglycerol_kinase_sf"/>
</dbReference>
<dbReference type="InterPro" id="IPR002504">
    <property type="entry name" value="NADK"/>
</dbReference>
<dbReference type="PANTHER" id="PTHR20275">
    <property type="entry name" value="NAD KINASE"/>
    <property type="match status" value="1"/>
</dbReference>
<dbReference type="PANTHER" id="PTHR20275:SF28">
    <property type="entry name" value="NADH KINASE"/>
    <property type="match status" value="1"/>
</dbReference>
<dbReference type="Pfam" id="PF01513">
    <property type="entry name" value="NAD_kinase"/>
    <property type="match status" value="1"/>
</dbReference>
<dbReference type="SUPFAM" id="SSF111331">
    <property type="entry name" value="NAD kinase/diacylglycerol kinase-like"/>
    <property type="match status" value="1"/>
</dbReference>
<accession>Q500Y9</accession>
<accession>Q9SYM3</accession>
<comment type="function">
    <text evidence="1">Phosphorylates specifically NADH. Can phosphorylate NAD with a 100-fold decrease in efficiency compared to NADH. Prefers ATP as nucleoside triphosphate substrate. Can also utilize UTP, GTP and CTP. Key source of the cellular reductant NADPH which is an important antioxidant factor.</text>
</comment>
<comment type="catalytic activity">
    <reaction evidence="5">
        <text>NADH + ATP = ADP + NADPH + H(+)</text>
        <dbReference type="Rhea" id="RHEA:12260"/>
        <dbReference type="ChEBI" id="CHEBI:15378"/>
        <dbReference type="ChEBI" id="CHEBI:30616"/>
        <dbReference type="ChEBI" id="CHEBI:57783"/>
        <dbReference type="ChEBI" id="CHEBI:57945"/>
        <dbReference type="ChEBI" id="CHEBI:456216"/>
        <dbReference type="EC" id="2.7.1.86"/>
    </reaction>
    <physiologicalReaction direction="left-to-right" evidence="5">
        <dbReference type="Rhea" id="RHEA:12261"/>
    </physiologicalReaction>
</comment>
<comment type="activity regulation">
    <text evidence="1">Two-fold decrease in activity in the presence of PPi, iodoacetate or para-chloromercuribenzoate.</text>
</comment>
<comment type="biophysicochemical properties">
    <kinetics>
        <KM evidence="1">42 uM for NADH</KM>
        <KM evidence="1">63 uM for ATP</KM>
        <KM evidence="1">2390 uM for NAD</KM>
        <Vmax evidence="1">41.2 umol/min/mg enzyme with NADH as substrate</Vmax>
        <Vmax evidence="1">39.5 umol/min/mg enzyme with ATP as substrate</Vmax>
        <Vmax evidence="1">23.2 umol/min/mg enzyme with NAD as substrate</Vmax>
        <text>Measured at pH 7.9 and 25 degrees Celsius for all experiments.</text>
    </kinetics>
    <phDependence>
        <text evidence="1">Optimum pH is 7.9 at 25 degrees Celsius.</text>
    </phDependence>
</comment>
<comment type="subunit">
    <text evidence="1">Homodimer.</text>
</comment>
<comment type="interaction">
    <interactant intactId="EBI-25512202">
        <id>Q500Y9</id>
    </interactant>
    <interactant intactId="EBI-25512202">
        <id>Q500Y9</id>
        <label>NADK3</label>
    </interactant>
    <organismsDiffer>false</organismsDiffer>
    <experiments>3</experiments>
</comment>
<comment type="subcellular location">
    <subcellularLocation>
        <location evidence="1">Cytoplasm</location>
    </subcellularLocation>
</comment>
<comment type="tissue specificity">
    <text evidence="2">Ubiquitous.</text>
</comment>
<comment type="similarity">
    <text evidence="4">Belongs to the NAD kinase family.</text>
</comment>
<comment type="sequence caution" evidence="4">
    <conflict type="erroneous gene model prediction">
        <sequence resource="EMBL-CDS" id="AAD30577"/>
    </conflict>
</comment>
<protein>
    <recommendedName>
        <fullName evidence="3">NADH kinase</fullName>
        <shortName evidence="3">AtNADK-3</shortName>
        <ecNumber evidence="5">2.7.1.86</ecNumber>
    </recommendedName>
</protein>
<feature type="chain" id="PRO_0000233700" description="NADH kinase">
    <location>
        <begin position="1"/>
        <end position="317"/>
    </location>
</feature>